<keyword id="KW-0687">Ribonucleoprotein</keyword>
<keyword id="KW-0689">Ribosomal protein</keyword>
<keyword id="KW-0694">RNA-binding</keyword>
<keyword id="KW-0699">rRNA-binding</keyword>
<proteinExistence type="inferred from homology"/>
<reference key="1">
    <citation type="journal article" date="2004" name="Nucleic Acids Res.">
        <title>Comparative analysis of the Borrelia garinii genome.</title>
        <authorList>
            <person name="Gloeckner G."/>
            <person name="Lehmann R."/>
            <person name="Romualdi A."/>
            <person name="Pradella S."/>
            <person name="Schulte-Spechtel U."/>
            <person name="Schilhabel M."/>
            <person name="Wilske B."/>
            <person name="Suehnel J."/>
            <person name="Platzer M."/>
        </authorList>
    </citation>
    <scope>NUCLEOTIDE SEQUENCE [LARGE SCALE GENOMIC DNA]</scope>
    <source>
        <strain>ATCC BAA-2496 / DSM 23469 / PBi</strain>
    </source>
</reference>
<evidence type="ECO:0000255" key="1">
    <source>
        <dbReference type="HAMAP-Rule" id="MF_00531"/>
    </source>
</evidence>
<evidence type="ECO:0000305" key="2"/>
<comment type="function">
    <text evidence="1">Protein S19 forms a complex with S13 that binds strongly to the 16S ribosomal RNA.</text>
</comment>
<comment type="similarity">
    <text evidence="1">Belongs to the universal ribosomal protein uS19 family.</text>
</comment>
<name>RS19_BORGP</name>
<dbReference type="EMBL" id="CP000013">
    <property type="protein sequence ID" value="AAU07333.1"/>
    <property type="molecule type" value="Genomic_DNA"/>
</dbReference>
<dbReference type="RefSeq" id="WP_002557073.1">
    <property type="nucleotide sequence ID" value="NZ_CP028872.1"/>
</dbReference>
<dbReference type="SMR" id="Q661D8"/>
<dbReference type="GeneID" id="83865957"/>
<dbReference type="KEGG" id="bga:BG0494"/>
<dbReference type="eggNOG" id="COG0185">
    <property type="taxonomic scope" value="Bacteria"/>
</dbReference>
<dbReference type="HOGENOM" id="CLU_144911_0_1_12"/>
<dbReference type="OrthoDB" id="9797833at2"/>
<dbReference type="Proteomes" id="UP000002276">
    <property type="component" value="Chromosome"/>
</dbReference>
<dbReference type="GO" id="GO:0005737">
    <property type="term" value="C:cytoplasm"/>
    <property type="evidence" value="ECO:0007669"/>
    <property type="project" value="UniProtKB-ARBA"/>
</dbReference>
<dbReference type="GO" id="GO:0015935">
    <property type="term" value="C:small ribosomal subunit"/>
    <property type="evidence" value="ECO:0007669"/>
    <property type="project" value="InterPro"/>
</dbReference>
<dbReference type="GO" id="GO:0019843">
    <property type="term" value="F:rRNA binding"/>
    <property type="evidence" value="ECO:0007669"/>
    <property type="project" value="UniProtKB-UniRule"/>
</dbReference>
<dbReference type="GO" id="GO:0003735">
    <property type="term" value="F:structural constituent of ribosome"/>
    <property type="evidence" value="ECO:0007669"/>
    <property type="project" value="InterPro"/>
</dbReference>
<dbReference type="GO" id="GO:0000028">
    <property type="term" value="P:ribosomal small subunit assembly"/>
    <property type="evidence" value="ECO:0007669"/>
    <property type="project" value="TreeGrafter"/>
</dbReference>
<dbReference type="GO" id="GO:0006412">
    <property type="term" value="P:translation"/>
    <property type="evidence" value="ECO:0007669"/>
    <property type="project" value="UniProtKB-UniRule"/>
</dbReference>
<dbReference type="FunFam" id="3.30.860.10:FF:000001">
    <property type="entry name" value="30S ribosomal protein S19"/>
    <property type="match status" value="1"/>
</dbReference>
<dbReference type="Gene3D" id="3.30.860.10">
    <property type="entry name" value="30s Ribosomal Protein S19, Chain A"/>
    <property type="match status" value="1"/>
</dbReference>
<dbReference type="HAMAP" id="MF_00531">
    <property type="entry name" value="Ribosomal_uS19"/>
    <property type="match status" value="1"/>
</dbReference>
<dbReference type="InterPro" id="IPR002222">
    <property type="entry name" value="Ribosomal_uS19"/>
</dbReference>
<dbReference type="InterPro" id="IPR005732">
    <property type="entry name" value="Ribosomal_uS19_bac-type"/>
</dbReference>
<dbReference type="InterPro" id="IPR020934">
    <property type="entry name" value="Ribosomal_uS19_CS"/>
</dbReference>
<dbReference type="InterPro" id="IPR023575">
    <property type="entry name" value="Ribosomal_uS19_SF"/>
</dbReference>
<dbReference type="NCBIfam" id="TIGR01050">
    <property type="entry name" value="rpsS_bact"/>
    <property type="match status" value="1"/>
</dbReference>
<dbReference type="PANTHER" id="PTHR11880">
    <property type="entry name" value="RIBOSOMAL PROTEIN S19P FAMILY MEMBER"/>
    <property type="match status" value="1"/>
</dbReference>
<dbReference type="PANTHER" id="PTHR11880:SF8">
    <property type="entry name" value="SMALL RIBOSOMAL SUBUNIT PROTEIN US19M"/>
    <property type="match status" value="1"/>
</dbReference>
<dbReference type="Pfam" id="PF00203">
    <property type="entry name" value="Ribosomal_S19"/>
    <property type="match status" value="1"/>
</dbReference>
<dbReference type="PIRSF" id="PIRSF002144">
    <property type="entry name" value="Ribosomal_S19"/>
    <property type="match status" value="1"/>
</dbReference>
<dbReference type="PRINTS" id="PR00975">
    <property type="entry name" value="RIBOSOMALS19"/>
</dbReference>
<dbReference type="SUPFAM" id="SSF54570">
    <property type="entry name" value="Ribosomal protein S19"/>
    <property type="match status" value="1"/>
</dbReference>
<dbReference type="PROSITE" id="PS00323">
    <property type="entry name" value="RIBOSOMAL_S19"/>
    <property type="match status" value="1"/>
</dbReference>
<gene>
    <name evidence="1" type="primary">rpsS</name>
    <name type="ordered locus">BG0494</name>
</gene>
<sequence length="92" mass="10410">MARSIKKGPFIEKSLYQKVLSSFGSEKRVVIKTYSRSSTIIPEMVSLTISVYNGKTFIPIYITEDLVGHKLGEFSPTRIFRGHAKSDKKGRK</sequence>
<accession>Q661D8</accession>
<protein>
    <recommendedName>
        <fullName evidence="1">Small ribosomal subunit protein uS19</fullName>
    </recommendedName>
    <alternativeName>
        <fullName evidence="2">30S ribosomal protein S19</fullName>
    </alternativeName>
</protein>
<feature type="chain" id="PRO_0000129788" description="Small ribosomal subunit protein uS19">
    <location>
        <begin position="1"/>
        <end position="92"/>
    </location>
</feature>
<organism>
    <name type="scientific">Borrelia garinii subsp. bavariensis (strain ATCC BAA-2496 / DSM 23469 / PBi)</name>
    <name type="common">Borreliella bavariensis</name>
    <dbReference type="NCBI Taxonomy" id="290434"/>
    <lineage>
        <taxon>Bacteria</taxon>
        <taxon>Pseudomonadati</taxon>
        <taxon>Spirochaetota</taxon>
        <taxon>Spirochaetia</taxon>
        <taxon>Spirochaetales</taxon>
        <taxon>Borreliaceae</taxon>
        <taxon>Borreliella</taxon>
    </lineage>
</organism>